<feature type="chain" id="PRO_0000332956" description="MAP kinase phosphatase with leucine-rich repeats protein 1">
    <location>
        <begin position="1"/>
        <end position="834"/>
    </location>
</feature>
<feature type="repeat" description="LRR 1">
    <location>
        <begin position="160"/>
        <end position="181"/>
    </location>
</feature>
<feature type="repeat" description="LRR 2">
    <location>
        <begin position="183"/>
        <end position="204"/>
    </location>
</feature>
<feature type="repeat" description="LRR 3">
    <location>
        <begin position="206"/>
        <end position="226"/>
    </location>
</feature>
<feature type="repeat" description="LRR 4">
    <location>
        <begin position="229"/>
        <end position="251"/>
    </location>
</feature>
<feature type="repeat" description="LRR 5">
    <location>
        <begin position="252"/>
        <end position="273"/>
    </location>
</feature>
<feature type="repeat" description="LRR 6">
    <location>
        <begin position="274"/>
        <end position="292"/>
    </location>
</feature>
<feature type="repeat" description="LRR 7">
    <location>
        <begin position="298"/>
        <end position="319"/>
    </location>
</feature>
<feature type="repeat" description="LRR 8">
    <location>
        <begin position="321"/>
        <end position="342"/>
    </location>
</feature>
<feature type="repeat" description="LRR 9">
    <location>
        <begin position="345"/>
        <end position="366"/>
    </location>
</feature>
<feature type="repeat" description="LRR 10">
    <location>
        <begin position="368"/>
        <end position="389"/>
    </location>
</feature>
<feature type="domain" description="Tyrosine-protein phosphatase" evidence="3">
    <location>
        <begin position="695"/>
        <end position="834"/>
    </location>
</feature>
<feature type="region of interest" description="Disordered" evidence="5">
    <location>
        <begin position="1"/>
        <end position="103"/>
    </location>
</feature>
<feature type="region of interest" description="Disordered" evidence="5">
    <location>
        <begin position="503"/>
        <end position="584"/>
    </location>
</feature>
<feature type="coiled-coil region" evidence="2">
    <location>
        <begin position="555"/>
        <end position="615"/>
    </location>
</feature>
<feature type="compositionally biased region" description="Low complexity" evidence="5">
    <location>
        <begin position="36"/>
        <end position="78"/>
    </location>
</feature>
<feature type="compositionally biased region" description="Polar residues" evidence="5">
    <location>
        <begin position="79"/>
        <end position="98"/>
    </location>
</feature>
<feature type="compositionally biased region" description="Polar residues" evidence="5">
    <location>
        <begin position="511"/>
        <end position="536"/>
    </location>
</feature>
<feature type="compositionally biased region" description="Basic and acidic residues" evidence="5">
    <location>
        <begin position="538"/>
        <end position="554"/>
    </location>
</feature>
<feature type="compositionally biased region" description="Basic and acidic residues" evidence="5">
    <location>
        <begin position="569"/>
        <end position="582"/>
    </location>
</feature>
<feature type="active site" description="Phosphocysteine intermediate" evidence="3">
    <location>
        <position position="778"/>
    </location>
</feature>
<organism>
    <name type="scientific">Dictyostelium discoideum</name>
    <name type="common">Social amoeba</name>
    <dbReference type="NCBI Taxonomy" id="44689"/>
    <lineage>
        <taxon>Eukaryota</taxon>
        <taxon>Amoebozoa</taxon>
        <taxon>Evosea</taxon>
        <taxon>Eumycetozoa</taxon>
        <taxon>Dictyostelia</taxon>
        <taxon>Dictyosteliales</taxon>
        <taxon>Dictyosteliaceae</taxon>
        <taxon>Dictyostelium</taxon>
    </lineage>
</organism>
<protein>
    <recommendedName>
        <fullName>MAP kinase phosphatase with leucine-rich repeats protein 1</fullName>
        <ecNumber>3.1.3.16</ecNumber>
        <ecNumber>3.1.3.48</ecNumber>
    </recommendedName>
</protein>
<accession>Q55CS7</accession>
<sequence>MIFKKLFSKGSTSPTTRPRGATFSGTFPTDVLSDDGSGTNTNGLSNSTTNPSSIHSTPTTPTTTASTNLTNSNKLSTLAPITNGNRSLRGSKDGSGTTKESKKKVLTLNEKQKLLLKSMEYIKGSGTYYGNYMEFYEIPIQIYVGTEPSETYPSLSYNTELRSLILDFNKITEIPEQIGLLPNLKHLSLAANQLSQVPEFLSQLKSLESLELGINQFTSFPLNICKIKSLTLLRLETNNIKSLPDDFINLENLKDLSLLDNQLKEIPDSLPNNIEKLNLGCNDIINSYSKSLIRISHSLTTLNLSENKIEVLDESLSCLVNVKTLILDCNMIKVIPGSVLGSWKSLVTLNLPHNFISDLPAEIVTLDNLRIIDLRGNNFEFCKNYPSSESSSILFKIEEFIKDKEKLKSLILKENLEILSKLKDDNSTTTTTNINSNLDVPIIITTNIETIPTTSTTATTTETTNDITFKISDITEIIEKTDTTTTTTTTNQTDNVKLEEKVYEKQENDENNSVTLETTTTISIASDNTDEASIQIPQKEDGDKENLENDDKLLQESFSENNNNNNNEKQQEQQENPLKESQGKIQQLEEELEKLEQKQLELKDKIRLEKIKYQEIQQQSPRLSQQENNQEAIVVNTQPSSPPPTIIVNEQKSEKLENEKPTKREQPMVVVTKNNNKAEVEMTAPNQLIFWQSIVPDLIIDKLYLGCRECAMNKSWLKDNNVTHILTVANFKPLYPDLFKYLIINIDDVDEANIYQYFKEMNTFIDEGREKGGVLIHCRAGVSRSATATIAYIMMKNSVKFQEAFDITIKGRSRIYPNRGFLNQLKKFEKDLSK</sequence>
<keyword id="KW-0145">Chemotaxis</keyword>
<keyword id="KW-0175">Coiled coil</keyword>
<keyword id="KW-0378">Hydrolase</keyword>
<keyword id="KW-0433">Leucine-rich repeat</keyword>
<keyword id="KW-0904">Protein phosphatase</keyword>
<keyword id="KW-1185">Reference proteome</keyword>
<keyword id="KW-0677">Repeat</keyword>
<proteinExistence type="evidence at transcript level"/>
<comment type="function">
    <text evidence="1 6">Probable phosphatase with dual specificity toward Ser/Thr and Tyr-containing proteins (By similarity). Dephosphorylates pNPP, in vitro. Essential for proper regulation of erkB (erk2) and optimal motility during development.</text>
</comment>
<comment type="catalytic activity">
    <reaction evidence="4">
        <text>O-phospho-L-tyrosyl-[protein] + H2O = L-tyrosyl-[protein] + phosphate</text>
        <dbReference type="Rhea" id="RHEA:10684"/>
        <dbReference type="Rhea" id="RHEA-COMP:10136"/>
        <dbReference type="Rhea" id="RHEA-COMP:20101"/>
        <dbReference type="ChEBI" id="CHEBI:15377"/>
        <dbReference type="ChEBI" id="CHEBI:43474"/>
        <dbReference type="ChEBI" id="CHEBI:46858"/>
        <dbReference type="ChEBI" id="CHEBI:61978"/>
        <dbReference type="EC" id="3.1.3.48"/>
    </reaction>
</comment>
<comment type="catalytic activity">
    <reaction>
        <text>O-phospho-L-seryl-[protein] + H2O = L-seryl-[protein] + phosphate</text>
        <dbReference type="Rhea" id="RHEA:20629"/>
        <dbReference type="Rhea" id="RHEA-COMP:9863"/>
        <dbReference type="Rhea" id="RHEA-COMP:11604"/>
        <dbReference type="ChEBI" id="CHEBI:15377"/>
        <dbReference type="ChEBI" id="CHEBI:29999"/>
        <dbReference type="ChEBI" id="CHEBI:43474"/>
        <dbReference type="ChEBI" id="CHEBI:83421"/>
        <dbReference type="EC" id="3.1.3.16"/>
    </reaction>
</comment>
<comment type="catalytic activity">
    <reaction>
        <text>O-phospho-L-threonyl-[protein] + H2O = L-threonyl-[protein] + phosphate</text>
        <dbReference type="Rhea" id="RHEA:47004"/>
        <dbReference type="Rhea" id="RHEA-COMP:11060"/>
        <dbReference type="Rhea" id="RHEA-COMP:11605"/>
        <dbReference type="ChEBI" id="CHEBI:15377"/>
        <dbReference type="ChEBI" id="CHEBI:30013"/>
        <dbReference type="ChEBI" id="CHEBI:43474"/>
        <dbReference type="ChEBI" id="CHEBI:61977"/>
        <dbReference type="EC" id="3.1.3.16"/>
    </reaction>
</comment>
<comment type="developmental stage">
    <text evidence="6">Expressed (at protein levels). Up-regulated upon starvation, reaching a maximum around 10 hours. Expression subsequently declined but is present throughout development.</text>
</comment>
<comment type="disruption phenotype">
    <text evidence="6">Cells result in higher prestimulus and persistent stimulation erkB phosphorylation upon cAMP stimulation, display strong defects in motility, and more rapid cAMP production. Cells fail to display aggregates, fruiting bodies, fail to form territorial streams and are defective in cell migration (absence of random and directional migration) and in chemotaxis.</text>
</comment>
<comment type="similarity">
    <text evidence="7">Belongs to the protein-tyrosine phosphatase family. Non-receptor class dual specificity subfamily.</text>
</comment>
<dbReference type="EC" id="3.1.3.16"/>
<dbReference type="EC" id="3.1.3.48"/>
<dbReference type="EMBL" id="AAFI02000005">
    <property type="protein sequence ID" value="EAL72309.1"/>
    <property type="molecule type" value="Genomic_DNA"/>
</dbReference>
<dbReference type="RefSeq" id="XP_646404.1">
    <property type="nucleotide sequence ID" value="XM_641312.1"/>
</dbReference>
<dbReference type="SMR" id="Q55CS7"/>
<dbReference type="FunCoup" id="Q55CS7">
    <property type="interactions" value="622"/>
</dbReference>
<dbReference type="STRING" id="44689.Q55CS7"/>
<dbReference type="PaxDb" id="44689-DDB0238871"/>
<dbReference type="EnsemblProtists" id="EAL72309">
    <property type="protein sequence ID" value="EAL72309"/>
    <property type="gene ID" value="DDB_G0269918"/>
</dbReference>
<dbReference type="GeneID" id="8617360"/>
<dbReference type="KEGG" id="ddi:DDB_G0269918"/>
<dbReference type="dictyBase" id="DDB_G0269918">
    <property type="gene designation" value="mpl1"/>
</dbReference>
<dbReference type="VEuPathDB" id="AmoebaDB:DDB_G0269918"/>
<dbReference type="eggNOG" id="KOG0619">
    <property type="taxonomic scope" value="Eukaryota"/>
</dbReference>
<dbReference type="eggNOG" id="KOG1716">
    <property type="taxonomic scope" value="Eukaryota"/>
</dbReference>
<dbReference type="HOGENOM" id="CLU_396611_0_0_1"/>
<dbReference type="InParanoid" id="Q55CS7"/>
<dbReference type="OMA" id="KGSGTYY"/>
<dbReference type="Reactome" id="R-DDI-112409">
    <property type="pathway name" value="RAF-independent MAPK1/3 activation"/>
</dbReference>
<dbReference type="Reactome" id="R-DDI-202670">
    <property type="pathway name" value="ERKs are inactivated"/>
</dbReference>
<dbReference type="Reactome" id="R-DDI-5675221">
    <property type="pathway name" value="Negative regulation of MAPK pathway"/>
</dbReference>
<dbReference type="PRO" id="PR:Q55CS7"/>
<dbReference type="Proteomes" id="UP000002195">
    <property type="component" value="Chromosome 1"/>
</dbReference>
<dbReference type="GO" id="GO:0005737">
    <property type="term" value="C:cytoplasm"/>
    <property type="evidence" value="ECO:0000318"/>
    <property type="project" value="GO_Central"/>
</dbReference>
<dbReference type="GO" id="GO:0004721">
    <property type="term" value="F:phosphoprotein phosphatase activity"/>
    <property type="evidence" value="ECO:0000315"/>
    <property type="project" value="dictyBase"/>
</dbReference>
<dbReference type="GO" id="GO:0004722">
    <property type="term" value="F:protein serine/threonine phosphatase activity"/>
    <property type="evidence" value="ECO:0007669"/>
    <property type="project" value="UniProtKB-EC"/>
</dbReference>
<dbReference type="GO" id="GO:0004725">
    <property type="term" value="F:protein tyrosine phosphatase activity"/>
    <property type="evidence" value="ECO:0007669"/>
    <property type="project" value="UniProtKB-EC"/>
</dbReference>
<dbReference type="GO" id="GO:0008138">
    <property type="term" value="F:protein tyrosine/serine/threonine phosphatase activity"/>
    <property type="evidence" value="ECO:0000304"/>
    <property type="project" value="dictyBase"/>
</dbReference>
<dbReference type="GO" id="GO:0031152">
    <property type="term" value="P:aggregation involved in sorocarp development"/>
    <property type="evidence" value="ECO:0000315"/>
    <property type="project" value="dictyBase"/>
</dbReference>
<dbReference type="GO" id="GO:0048870">
    <property type="term" value="P:cell motility"/>
    <property type="evidence" value="ECO:0000315"/>
    <property type="project" value="dictyBase"/>
</dbReference>
<dbReference type="GO" id="GO:0043327">
    <property type="term" value="P:chemotaxis to cAMP"/>
    <property type="evidence" value="ECO:0000315"/>
    <property type="project" value="dictyBase"/>
</dbReference>
<dbReference type="GO" id="GO:0070373">
    <property type="term" value="P:negative regulation of ERK1 and ERK2 cascade"/>
    <property type="evidence" value="ECO:0000315"/>
    <property type="project" value="dictyBase"/>
</dbReference>
<dbReference type="GO" id="GO:0043409">
    <property type="term" value="P:negative regulation of MAPK cascade"/>
    <property type="evidence" value="ECO:0000318"/>
    <property type="project" value="GO_Central"/>
</dbReference>
<dbReference type="GO" id="GO:0106070">
    <property type="term" value="P:regulation of adenylate cyclase-activating G protein-coupled receptor signaling pathway"/>
    <property type="evidence" value="ECO:0000315"/>
    <property type="project" value="dictyBase"/>
</dbReference>
<dbReference type="GO" id="GO:0007165">
    <property type="term" value="P:signal transduction"/>
    <property type="evidence" value="ECO:0000318"/>
    <property type="project" value="GO_Central"/>
</dbReference>
<dbReference type="CDD" id="cd14498">
    <property type="entry name" value="DSP"/>
    <property type="match status" value="1"/>
</dbReference>
<dbReference type="FunFam" id="3.90.190.10:FF:000133">
    <property type="entry name" value="Leucine rich repeat and phosphatase domain containing protein"/>
    <property type="match status" value="1"/>
</dbReference>
<dbReference type="FunFam" id="3.80.10.10:FF:001886">
    <property type="entry name" value="MAP kinase phosphatase with leucine-rich repeats protein 2"/>
    <property type="match status" value="1"/>
</dbReference>
<dbReference type="Gene3D" id="3.90.190.10">
    <property type="entry name" value="Protein tyrosine phosphatase superfamily"/>
    <property type="match status" value="1"/>
</dbReference>
<dbReference type="Gene3D" id="3.80.10.10">
    <property type="entry name" value="Ribonuclease Inhibitor"/>
    <property type="match status" value="1"/>
</dbReference>
<dbReference type="InterPro" id="IPR000340">
    <property type="entry name" value="Dual-sp_phosphatase_cat-dom"/>
</dbReference>
<dbReference type="InterPro" id="IPR001611">
    <property type="entry name" value="Leu-rich_rpt"/>
</dbReference>
<dbReference type="InterPro" id="IPR003591">
    <property type="entry name" value="Leu-rich_rpt_typical-subtyp"/>
</dbReference>
<dbReference type="InterPro" id="IPR032675">
    <property type="entry name" value="LRR_dom_sf"/>
</dbReference>
<dbReference type="InterPro" id="IPR029021">
    <property type="entry name" value="Prot-tyrosine_phosphatase-like"/>
</dbReference>
<dbReference type="InterPro" id="IPR016130">
    <property type="entry name" value="Tyr_Pase_AS"/>
</dbReference>
<dbReference type="InterPro" id="IPR000387">
    <property type="entry name" value="Tyr_Pase_dom"/>
</dbReference>
<dbReference type="InterPro" id="IPR020422">
    <property type="entry name" value="TYR_PHOSPHATASE_DUAL_dom"/>
</dbReference>
<dbReference type="PANTHER" id="PTHR10159">
    <property type="entry name" value="DUAL SPECIFICITY PROTEIN PHOSPHATASE"/>
    <property type="match status" value="1"/>
</dbReference>
<dbReference type="PANTHER" id="PTHR10159:SF515">
    <property type="entry name" value="MAP KINASE PHOSPHATASE WITH LEUCINE-RICH REPEATS PROTEIN 1-RELATED"/>
    <property type="match status" value="1"/>
</dbReference>
<dbReference type="Pfam" id="PF00782">
    <property type="entry name" value="DSPc"/>
    <property type="match status" value="1"/>
</dbReference>
<dbReference type="Pfam" id="PF13855">
    <property type="entry name" value="LRR_8"/>
    <property type="match status" value="2"/>
</dbReference>
<dbReference type="SMART" id="SM00195">
    <property type="entry name" value="DSPc"/>
    <property type="match status" value="1"/>
</dbReference>
<dbReference type="SMART" id="SM00364">
    <property type="entry name" value="LRR_BAC"/>
    <property type="match status" value="6"/>
</dbReference>
<dbReference type="SMART" id="SM00369">
    <property type="entry name" value="LRR_TYP"/>
    <property type="match status" value="7"/>
</dbReference>
<dbReference type="SUPFAM" id="SSF52799">
    <property type="entry name" value="(Phosphotyrosine protein) phosphatases II"/>
    <property type="match status" value="1"/>
</dbReference>
<dbReference type="SUPFAM" id="SSF52058">
    <property type="entry name" value="L domain-like"/>
    <property type="match status" value="1"/>
</dbReference>
<dbReference type="PROSITE" id="PS51450">
    <property type="entry name" value="LRR"/>
    <property type="match status" value="9"/>
</dbReference>
<dbReference type="PROSITE" id="PS00383">
    <property type="entry name" value="TYR_PHOSPHATASE_1"/>
    <property type="match status" value="1"/>
</dbReference>
<dbReference type="PROSITE" id="PS50056">
    <property type="entry name" value="TYR_PHOSPHATASE_2"/>
    <property type="match status" value="1"/>
</dbReference>
<dbReference type="PROSITE" id="PS50054">
    <property type="entry name" value="TYR_PHOSPHATASE_DUAL"/>
    <property type="match status" value="1"/>
</dbReference>
<name>MPL1_DICDI</name>
<gene>
    <name type="primary">mpl1</name>
    <name type="ORF">DDB_G0269918</name>
</gene>
<reference key="1">
    <citation type="journal article" date="2005" name="Nature">
        <title>The genome of the social amoeba Dictyostelium discoideum.</title>
        <authorList>
            <person name="Eichinger L."/>
            <person name="Pachebat J.A."/>
            <person name="Gloeckner G."/>
            <person name="Rajandream M.A."/>
            <person name="Sucgang R."/>
            <person name="Berriman M."/>
            <person name="Song J."/>
            <person name="Olsen R."/>
            <person name="Szafranski K."/>
            <person name="Xu Q."/>
            <person name="Tunggal B."/>
            <person name="Kummerfeld S."/>
            <person name="Madera M."/>
            <person name="Konfortov B.A."/>
            <person name="Rivero F."/>
            <person name="Bankier A.T."/>
            <person name="Lehmann R."/>
            <person name="Hamlin N."/>
            <person name="Davies R."/>
            <person name="Gaudet P."/>
            <person name="Fey P."/>
            <person name="Pilcher K."/>
            <person name="Chen G."/>
            <person name="Saunders D."/>
            <person name="Sodergren E.J."/>
            <person name="Davis P."/>
            <person name="Kerhornou A."/>
            <person name="Nie X."/>
            <person name="Hall N."/>
            <person name="Anjard C."/>
            <person name="Hemphill L."/>
            <person name="Bason N."/>
            <person name="Farbrother P."/>
            <person name="Desany B."/>
            <person name="Just E."/>
            <person name="Morio T."/>
            <person name="Rost R."/>
            <person name="Churcher C.M."/>
            <person name="Cooper J."/>
            <person name="Haydock S."/>
            <person name="van Driessche N."/>
            <person name="Cronin A."/>
            <person name="Goodhead I."/>
            <person name="Muzny D.M."/>
            <person name="Mourier T."/>
            <person name="Pain A."/>
            <person name="Lu M."/>
            <person name="Harper D."/>
            <person name="Lindsay R."/>
            <person name="Hauser H."/>
            <person name="James K.D."/>
            <person name="Quiles M."/>
            <person name="Madan Babu M."/>
            <person name="Saito T."/>
            <person name="Buchrieser C."/>
            <person name="Wardroper A."/>
            <person name="Felder M."/>
            <person name="Thangavelu M."/>
            <person name="Johnson D."/>
            <person name="Knights A."/>
            <person name="Loulseged H."/>
            <person name="Mungall K.L."/>
            <person name="Oliver K."/>
            <person name="Price C."/>
            <person name="Quail M.A."/>
            <person name="Urushihara H."/>
            <person name="Hernandez J."/>
            <person name="Rabbinowitsch E."/>
            <person name="Steffen D."/>
            <person name="Sanders M."/>
            <person name="Ma J."/>
            <person name="Kohara Y."/>
            <person name="Sharp S."/>
            <person name="Simmonds M.N."/>
            <person name="Spiegler S."/>
            <person name="Tivey A."/>
            <person name="Sugano S."/>
            <person name="White B."/>
            <person name="Walker D."/>
            <person name="Woodward J.R."/>
            <person name="Winckler T."/>
            <person name="Tanaka Y."/>
            <person name="Shaulsky G."/>
            <person name="Schleicher M."/>
            <person name="Weinstock G.M."/>
            <person name="Rosenthal A."/>
            <person name="Cox E.C."/>
            <person name="Chisholm R.L."/>
            <person name="Gibbs R.A."/>
            <person name="Loomis W.F."/>
            <person name="Platzer M."/>
            <person name="Kay R.R."/>
            <person name="Williams J.G."/>
            <person name="Dear P.H."/>
            <person name="Noegel A.A."/>
            <person name="Barrell B.G."/>
            <person name="Kuspa A."/>
        </authorList>
    </citation>
    <scope>NUCLEOTIDE SEQUENCE [LARGE SCALE GENOMIC DNA]</scope>
    <source>
        <strain>AX4</strain>
    </source>
</reference>
<reference key="2">
    <citation type="journal article" date="2008" name="Eukaryot. Cell">
        <title>MPL1, a novel phosphatase with leucine-rich repeats, is essential for proper ERK2 phosphorylation and cell motility.</title>
        <authorList>
            <person name="Rodriguez M."/>
            <person name="Kim B."/>
            <person name="Lee N.-S."/>
            <person name="Veeranki S."/>
            <person name="Kim L."/>
        </authorList>
    </citation>
    <scope>FUNCTION</scope>
    <scope>DISRUPTION PHENOTYPE</scope>
    <scope>DEVELOPMENTAL STAGE</scope>
</reference>
<evidence type="ECO:0000250" key="1"/>
<evidence type="ECO:0000255" key="2"/>
<evidence type="ECO:0000255" key="3">
    <source>
        <dbReference type="PROSITE-ProRule" id="PRU00160"/>
    </source>
</evidence>
<evidence type="ECO:0000255" key="4">
    <source>
        <dbReference type="PROSITE-ProRule" id="PRU10044"/>
    </source>
</evidence>
<evidence type="ECO:0000256" key="5">
    <source>
        <dbReference type="SAM" id="MobiDB-lite"/>
    </source>
</evidence>
<evidence type="ECO:0000269" key="6">
    <source>
    </source>
</evidence>
<evidence type="ECO:0000305" key="7"/>